<organism>
    <name type="scientific">Arabidopsis thaliana</name>
    <name type="common">Mouse-ear cress</name>
    <dbReference type="NCBI Taxonomy" id="3702"/>
    <lineage>
        <taxon>Eukaryota</taxon>
        <taxon>Viridiplantae</taxon>
        <taxon>Streptophyta</taxon>
        <taxon>Embryophyta</taxon>
        <taxon>Tracheophyta</taxon>
        <taxon>Spermatophyta</taxon>
        <taxon>Magnoliopsida</taxon>
        <taxon>eudicotyledons</taxon>
        <taxon>Gunneridae</taxon>
        <taxon>Pentapetalae</taxon>
        <taxon>rosids</taxon>
        <taxon>malvids</taxon>
        <taxon>Brassicales</taxon>
        <taxon>Brassicaceae</taxon>
        <taxon>Camelineae</taxon>
        <taxon>Arabidopsis</taxon>
    </lineage>
</organism>
<accession>Q9M9V6</accession>
<accession>B2LWF5</accession>
<name>ICS2_ARATH</name>
<reference key="1">
    <citation type="journal article" date="2008" name="Plant Physiol.">
        <title>Characterization and biological function of the ISOCHORISMATE SYNTHASE2 gene of Arabidopsis.</title>
        <authorList>
            <person name="Garcion C."/>
            <person name="Lohmann A."/>
            <person name="Lamodiere E."/>
            <person name="Catinot J."/>
            <person name="Buchala A."/>
            <person name="Doermann P."/>
            <person name="Metraux J.-P."/>
        </authorList>
    </citation>
    <scope>NUCLEOTIDE SEQUENCE [MRNA]</scope>
    <scope>FUNCTION</scope>
    <scope>CATALYTIC ACTIVITY</scope>
    <scope>SUBCELLULAR LOCATION</scope>
    <scope>DISRUPTION PHENOTYPE</scope>
</reference>
<reference key="2">
    <citation type="journal article" date="2000" name="Nature">
        <title>Sequence and analysis of chromosome 1 of the plant Arabidopsis thaliana.</title>
        <authorList>
            <person name="Theologis A."/>
            <person name="Ecker J.R."/>
            <person name="Palm C.J."/>
            <person name="Federspiel N.A."/>
            <person name="Kaul S."/>
            <person name="White O."/>
            <person name="Alonso J."/>
            <person name="Altafi H."/>
            <person name="Araujo R."/>
            <person name="Bowman C.L."/>
            <person name="Brooks S.Y."/>
            <person name="Buehler E."/>
            <person name="Chan A."/>
            <person name="Chao Q."/>
            <person name="Chen H."/>
            <person name="Cheuk R.F."/>
            <person name="Chin C.W."/>
            <person name="Chung M.K."/>
            <person name="Conn L."/>
            <person name="Conway A.B."/>
            <person name="Conway A.R."/>
            <person name="Creasy T.H."/>
            <person name="Dewar K."/>
            <person name="Dunn P."/>
            <person name="Etgu P."/>
            <person name="Feldblyum T.V."/>
            <person name="Feng J.-D."/>
            <person name="Fong B."/>
            <person name="Fujii C.Y."/>
            <person name="Gill J.E."/>
            <person name="Goldsmith A.D."/>
            <person name="Haas B."/>
            <person name="Hansen N.F."/>
            <person name="Hughes B."/>
            <person name="Huizar L."/>
            <person name="Hunter J.L."/>
            <person name="Jenkins J."/>
            <person name="Johnson-Hopson C."/>
            <person name="Khan S."/>
            <person name="Khaykin E."/>
            <person name="Kim C.J."/>
            <person name="Koo H.L."/>
            <person name="Kremenetskaia I."/>
            <person name="Kurtz D.B."/>
            <person name="Kwan A."/>
            <person name="Lam B."/>
            <person name="Langin-Hooper S."/>
            <person name="Lee A."/>
            <person name="Lee J.M."/>
            <person name="Lenz C.A."/>
            <person name="Li J.H."/>
            <person name="Li Y.-P."/>
            <person name="Lin X."/>
            <person name="Liu S.X."/>
            <person name="Liu Z.A."/>
            <person name="Luros J.S."/>
            <person name="Maiti R."/>
            <person name="Marziali A."/>
            <person name="Militscher J."/>
            <person name="Miranda M."/>
            <person name="Nguyen M."/>
            <person name="Nierman W.C."/>
            <person name="Osborne B.I."/>
            <person name="Pai G."/>
            <person name="Peterson J."/>
            <person name="Pham P.K."/>
            <person name="Rizzo M."/>
            <person name="Rooney T."/>
            <person name="Rowley D."/>
            <person name="Sakano H."/>
            <person name="Salzberg S.L."/>
            <person name="Schwartz J.R."/>
            <person name="Shinn P."/>
            <person name="Southwick A.M."/>
            <person name="Sun H."/>
            <person name="Tallon L.J."/>
            <person name="Tambunga G."/>
            <person name="Toriumi M.J."/>
            <person name="Town C.D."/>
            <person name="Utterback T."/>
            <person name="Van Aken S."/>
            <person name="Vaysberg M."/>
            <person name="Vysotskaia V.S."/>
            <person name="Walker M."/>
            <person name="Wu D."/>
            <person name="Yu G."/>
            <person name="Fraser C.M."/>
            <person name="Venter J.C."/>
            <person name="Davis R.W."/>
        </authorList>
    </citation>
    <scope>NUCLEOTIDE SEQUENCE [LARGE SCALE GENOMIC DNA]</scope>
    <source>
        <strain>cv. Columbia</strain>
    </source>
</reference>
<reference key="3">
    <citation type="journal article" date="2017" name="Plant J.">
        <title>Araport11: a complete reannotation of the Arabidopsis thaliana reference genome.</title>
        <authorList>
            <person name="Cheng C.Y."/>
            <person name="Krishnakumar V."/>
            <person name="Chan A.P."/>
            <person name="Thibaud-Nissen F."/>
            <person name="Schobel S."/>
            <person name="Town C.D."/>
        </authorList>
    </citation>
    <scope>GENOME REANNOTATION</scope>
    <source>
        <strain>cv. Columbia</strain>
    </source>
</reference>
<reference key="4">
    <citation type="journal article" date="2006" name="J. Biol. Chem.">
        <title>A plant locus essential for phylloquinone (vitamin K1) biosynthesis originated from a fusion of four eubacterial genes.</title>
        <authorList>
            <person name="Gross J."/>
            <person name="Cho W.K."/>
            <person name="Lezhneva L."/>
            <person name="Falk J."/>
            <person name="Krupinska K."/>
            <person name="Shinozaki K."/>
            <person name="Seki M."/>
            <person name="Herrmann R.G."/>
            <person name="Meurer J."/>
        </authorList>
    </citation>
    <scope>FUNCTION</scope>
    <scope>DISRUPTION PHENOTYPE</scope>
</reference>
<feature type="transit peptide" description="Chloroplast" evidence="2">
    <location>
        <begin position="1"/>
        <end position="55"/>
    </location>
</feature>
<feature type="chain" id="PRO_0000343792" description="Isochorismate synthase 2, chloroplastic">
    <location>
        <begin position="56"/>
        <end position="562"/>
    </location>
</feature>
<sequence>MASLQCSFHFLGTNPKKYNPSSIFQSYSRTSFTKLSSRVSRQRFLRCTLSMNGCEADHKAPLGTVETRTLSTVPSPAAATERLITAVSDLKSQPPPFSSGIVRLQVPIEQKIGAIDWLHAQNEILPRSFFSRRSDSGRPDLLQDFSSDNGSSDHNPVSVAGIGSAVFFRDLDPFSHDDWRSIRRFLSSKSPLIRAYGGLRFDPTGKIAVEWEHFGSFYFTVPQVEFDEFGGSSMLAATVAWDNELSWTLENAIEALQETMLQVSSVIMRLRRESLGVIVVSKNHVPSEGAYYPAVNNALEIIKDKHSPLSKVVLARSSRIITDTDIDPIAWLARLQCEGQDAYQFCLQPPGAPAFIGNTPERLFHRKHLGVCSEALAATRPRGDSKVREMEIERDLLTSPKDDLEFSIVRENIREKLKTICDRVVVKPHKSVRKLARVQHLYSQLAGQLKREDDEFNILTALHPTPAVCGCPVEEARLLIKQIESFDRGMYAGPIGFFGGGESEFSVGIRSALVEKGLGALIYAGTGIVSGSNPSSEWNELELKISQFTKSLEHESALQPIN</sequence>
<gene>
    <name type="primary">ICS2</name>
    <name type="ordered locus">At1g18870</name>
    <name type="ORF">F6A14.3</name>
</gene>
<evidence type="ECO:0000250" key="1"/>
<evidence type="ECO:0000255" key="2"/>
<evidence type="ECO:0000269" key="3">
    <source>
    </source>
</evidence>
<evidence type="ECO:0000269" key="4">
    <source>
    </source>
</evidence>
<evidence type="ECO:0000305" key="5"/>
<evidence type="ECO:0000305" key="6">
    <source>
    </source>
</evidence>
<comment type="function">
    <text evidence="3 4">Isochorismate synthase involved in the synthesis of salicylic acid (SA) required for both local and systemic acquired resistance (LAR and SAR) while SA synthesized through the phenylalanine ammonium lyase (PAL) pathway seems to potentiate plant cell death. Also involved in phylloquinone (vitamin K1) synthesis. Has no isochorismate pyruvate lyase (IPL) activity.</text>
</comment>
<comment type="catalytic activity">
    <reaction evidence="6">
        <text>chorismate = isochorismate</text>
        <dbReference type="Rhea" id="RHEA:18985"/>
        <dbReference type="ChEBI" id="CHEBI:29748"/>
        <dbReference type="ChEBI" id="CHEBI:29780"/>
        <dbReference type="EC" id="5.4.4.2"/>
    </reaction>
</comment>
<comment type="cofactor">
    <cofactor evidence="1">
        <name>Mg(2+)</name>
        <dbReference type="ChEBI" id="CHEBI:18420"/>
    </cofactor>
</comment>
<comment type="pathway">
    <text>Siderophore biosynthesis; salicylate biosynthesis.</text>
</comment>
<comment type="subcellular location">
    <subcellularLocation>
        <location evidence="4">Plastid</location>
        <location evidence="4">Chloroplast</location>
    </subcellularLocation>
</comment>
<comment type="alternative products">
    <event type="alternative splicing"/>
    <isoform>
        <id>Q9M9V6-1</id>
        <name>1</name>
        <sequence type="displayed"/>
    </isoform>
    <text>A number of isoforms are produced. According to EST sequences.</text>
</comment>
<comment type="disruption phenotype">
    <text evidence="3 4">No visible phenotype; due to the redundancy with ICS1. Mutants are not impaired in salicylic acid accumulation upon induction. Ics1 and ics2 double mutant is seedling lethal due to photosynthetic lesions induced by the lack of phylloquinone.</text>
</comment>
<comment type="similarity">
    <text evidence="5">Belongs to the isochorismate synthase family.</text>
</comment>
<comment type="sequence caution" evidence="5">
    <conflict type="erroneous gene model prediction">
        <sequence resource="EMBL-CDS" id="AAF27094"/>
    </conflict>
</comment>
<dbReference type="EC" id="5.4.4.2" evidence="6"/>
<dbReference type="EMBL" id="EU589462">
    <property type="protein sequence ID" value="ACC60228.1"/>
    <property type="molecule type" value="mRNA"/>
</dbReference>
<dbReference type="EMBL" id="AC011809">
    <property type="protein sequence ID" value="AAF27094.1"/>
    <property type="status" value="ALT_SEQ"/>
    <property type="molecule type" value="Genomic_DNA"/>
</dbReference>
<dbReference type="EMBL" id="CP002684">
    <property type="protein sequence ID" value="AEE29773.1"/>
    <property type="molecule type" value="Genomic_DNA"/>
</dbReference>
<dbReference type="PIR" id="F86322">
    <property type="entry name" value="F86322"/>
</dbReference>
<dbReference type="RefSeq" id="NP_001154351.1">
    <property type="nucleotide sequence ID" value="NM_001160879.1"/>
</dbReference>
<dbReference type="RefSeq" id="NP_173321.4">
    <molecule id="Q9M9V6-1"/>
    <property type="nucleotide sequence ID" value="NM_101744.7"/>
</dbReference>
<dbReference type="SMR" id="Q9M9V6"/>
<dbReference type="FunCoup" id="Q9M9V6">
    <property type="interactions" value="239"/>
</dbReference>
<dbReference type="STRING" id="3702.Q9M9V6"/>
<dbReference type="GlyGen" id="Q9M9V6">
    <property type="glycosylation" value="1 site"/>
</dbReference>
<dbReference type="PaxDb" id="3702-AT1G18870.1"/>
<dbReference type="ProteomicsDB" id="228773">
    <molecule id="Q9M9V6-1"/>
</dbReference>
<dbReference type="EnsemblPlants" id="AT1G18870.1">
    <molecule id="Q9M9V6-1"/>
    <property type="protein sequence ID" value="AT1G18870.1"/>
    <property type="gene ID" value="AT1G18870"/>
</dbReference>
<dbReference type="GeneID" id="838468"/>
<dbReference type="Gramene" id="AT1G18870.1">
    <molecule id="Q9M9V6-1"/>
    <property type="protein sequence ID" value="AT1G18870.1"/>
    <property type="gene ID" value="AT1G18870"/>
</dbReference>
<dbReference type="KEGG" id="ath:AT1G18870"/>
<dbReference type="Araport" id="AT1G18870"/>
<dbReference type="TAIR" id="AT1G18870">
    <property type="gene designation" value="ICS2"/>
</dbReference>
<dbReference type="eggNOG" id="KOG1223">
    <property type="taxonomic scope" value="Eukaryota"/>
</dbReference>
<dbReference type="InParanoid" id="Q9M9V6"/>
<dbReference type="OrthoDB" id="8119704at2759"/>
<dbReference type="PhylomeDB" id="Q9M9V6"/>
<dbReference type="BRENDA" id="5.4.4.2">
    <property type="organism ID" value="399"/>
</dbReference>
<dbReference type="UniPathway" id="UPA00025"/>
<dbReference type="PRO" id="PR:Q9M9V6"/>
<dbReference type="Proteomes" id="UP000006548">
    <property type="component" value="Chromosome 1"/>
</dbReference>
<dbReference type="ExpressionAtlas" id="Q9M9V6">
    <property type="expression patterns" value="baseline and differential"/>
</dbReference>
<dbReference type="GO" id="GO:0009507">
    <property type="term" value="C:chloroplast"/>
    <property type="evidence" value="ECO:0007669"/>
    <property type="project" value="UniProtKB-SubCell"/>
</dbReference>
<dbReference type="GO" id="GO:0009536">
    <property type="term" value="C:plastid"/>
    <property type="evidence" value="ECO:0000314"/>
    <property type="project" value="TAIR"/>
</dbReference>
<dbReference type="GO" id="GO:0008909">
    <property type="term" value="F:isochorismate synthase activity"/>
    <property type="evidence" value="ECO:0000315"/>
    <property type="project" value="TAIR"/>
</dbReference>
<dbReference type="GO" id="GO:0006952">
    <property type="term" value="P:defense response"/>
    <property type="evidence" value="ECO:0007669"/>
    <property type="project" value="UniProtKB-KW"/>
</dbReference>
<dbReference type="GO" id="GO:0042372">
    <property type="term" value="P:phylloquinone biosynthetic process"/>
    <property type="evidence" value="ECO:0000315"/>
    <property type="project" value="TAIR"/>
</dbReference>
<dbReference type="GO" id="GO:0009697">
    <property type="term" value="P:salicylic acid biosynthetic process"/>
    <property type="evidence" value="ECO:0007669"/>
    <property type="project" value="UniProtKB-UniPathway"/>
</dbReference>
<dbReference type="FunFam" id="3.60.120.10:FF:000005">
    <property type="entry name" value="isochorismate synthase, chloroplastic-like isoform X1"/>
    <property type="match status" value="1"/>
</dbReference>
<dbReference type="Gene3D" id="3.60.120.10">
    <property type="entry name" value="Anthranilate synthase"/>
    <property type="match status" value="1"/>
</dbReference>
<dbReference type="InterPro" id="IPR005801">
    <property type="entry name" value="ADC_synthase"/>
</dbReference>
<dbReference type="InterPro" id="IPR015890">
    <property type="entry name" value="Chorismate_C"/>
</dbReference>
<dbReference type="InterPro" id="IPR004561">
    <property type="entry name" value="IsoChor_synthase"/>
</dbReference>
<dbReference type="InterPro" id="IPR044250">
    <property type="entry name" value="MenF-like"/>
</dbReference>
<dbReference type="NCBIfam" id="TIGR00543">
    <property type="entry name" value="isochor_syn"/>
    <property type="match status" value="1"/>
</dbReference>
<dbReference type="PANTHER" id="PTHR47253">
    <property type="match status" value="1"/>
</dbReference>
<dbReference type="PANTHER" id="PTHR47253:SF4">
    <property type="entry name" value="ISOCHORISMATE SYNTHASE 2, CHLOROPLASTIC"/>
    <property type="match status" value="1"/>
</dbReference>
<dbReference type="Pfam" id="PF00425">
    <property type="entry name" value="Chorismate_bind"/>
    <property type="match status" value="1"/>
</dbReference>
<dbReference type="SUPFAM" id="SSF56322">
    <property type="entry name" value="ADC synthase"/>
    <property type="match status" value="1"/>
</dbReference>
<keyword id="KW-0025">Alternative splicing</keyword>
<keyword id="KW-0150">Chloroplast</keyword>
<keyword id="KW-0413">Isomerase</keyword>
<keyword id="KW-0460">Magnesium</keyword>
<keyword id="KW-0611">Plant defense</keyword>
<keyword id="KW-0934">Plastid</keyword>
<keyword id="KW-1185">Reference proteome</keyword>
<keyword id="KW-0809">Transit peptide</keyword>
<proteinExistence type="evidence at protein level"/>
<protein>
    <recommendedName>
        <fullName>Isochorismate synthase 2, chloroplastic</fullName>
        <shortName>AtIcs2</shortName>
        <ecNumber evidence="6">5.4.4.2</ecNumber>
    </recommendedName>
    <alternativeName>
        <fullName>Isochorismate mutase 2</fullName>
    </alternativeName>
    <alternativeName>
        <fullName>menF-like protein 2</fullName>
    </alternativeName>
</protein>